<sequence length="156" mass="17679">MSRKNQAPKREVLPDPLYNSKIVTRLINRVMLDGKRGTAATIVYDAFNAIKEATGNDALEVFETAMDNIMPVLEVRARRVGGSNYQVPVEVRPERRTTLGLRWLVNASRARGEHTMKDRLAKEIMDAANNTGASVKKREDTHKMAEANRAFAHFRW</sequence>
<name>RS7_STRP8</name>
<protein>
    <recommendedName>
        <fullName evidence="1">Small ribosomal subunit protein uS7</fullName>
    </recommendedName>
    <alternativeName>
        <fullName evidence="2">30S ribosomal protein S7</fullName>
    </alternativeName>
</protein>
<feature type="chain" id="PRO_0000124360" description="Small ribosomal subunit protein uS7">
    <location>
        <begin position="1"/>
        <end position="156"/>
    </location>
</feature>
<organism>
    <name type="scientific">Streptococcus pyogenes serotype M18 (strain MGAS8232)</name>
    <dbReference type="NCBI Taxonomy" id="186103"/>
    <lineage>
        <taxon>Bacteria</taxon>
        <taxon>Bacillati</taxon>
        <taxon>Bacillota</taxon>
        <taxon>Bacilli</taxon>
        <taxon>Lactobacillales</taxon>
        <taxon>Streptococcaceae</taxon>
        <taxon>Streptococcus</taxon>
    </lineage>
</organism>
<dbReference type="EMBL" id="AE009949">
    <property type="protein sequence ID" value="AAL97039.1"/>
    <property type="molecule type" value="Genomic_DNA"/>
</dbReference>
<dbReference type="RefSeq" id="WP_002992078.1">
    <property type="nucleotide sequence ID" value="NC_003485.1"/>
</dbReference>
<dbReference type="SMR" id="P66620"/>
<dbReference type="GeneID" id="83689922"/>
<dbReference type="KEGG" id="spm:spyM18_0259"/>
<dbReference type="HOGENOM" id="CLU_072226_1_1_9"/>
<dbReference type="GO" id="GO:0015935">
    <property type="term" value="C:small ribosomal subunit"/>
    <property type="evidence" value="ECO:0007669"/>
    <property type="project" value="InterPro"/>
</dbReference>
<dbReference type="GO" id="GO:0019843">
    <property type="term" value="F:rRNA binding"/>
    <property type="evidence" value="ECO:0007669"/>
    <property type="project" value="UniProtKB-UniRule"/>
</dbReference>
<dbReference type="GO" id="GO:0003735">
    <property type="term" value="F:structural constituent of ribosome"/>
    <property type="evidence" value="ECO:0007669"/>
    <property type="project" value="InterPro"/>
</dbReference>
<dbReference type="GO" id="GO:0000049">
    <property type="term" value="F:tRNA binding"/>
    <property type="evidence" value="ECO:0007669"/>
    <property type="project" value="UniProtKB-UniRule"/>
</dbReference>
<dbReference type="GO" id="GO:0006412">
    <property type="term" value="P:translation"/>
    <property type="evidence" value="ECO:0007669"/>
    <property type="project" value="UniProtKB-UniRule"/>
</dbReference>
<dbReference type="CDD" id="cd14869">
    <property type="entry name" value="uS7_Bacteria"/>
    <property type="match status" value="1"/>
</dbReference>
<dbReference type="FunFam" id="1.10.455.10:FF:000001">
    <property type="entry name" value="30S ribosomal protein S7"/>
    <property type="match status" value="1"/>
</dbReference>
<dbReference type="Gene3D" id="1.10.455.10">
    <property type="entry name" value="Ribosomal protein S7 domain"/>
    <property type="match status" value="1"/>
</dbReference>
<dbReference type="HAMAP" id="MF_00480_B">
    <property type="entry name" value="Ribosomal_uS7_B"/>
    <property type="match status" value="1"/>
</dbReference>
<dbReference type="InterPro" id="IPR000235">
    <property type="entry name" value="Ribosomal_uS7"/>
</dbReference>
<dbReference type="InterPro" id="IPR005717">
    <property type="entry name" value="Ribosomal_uS7_bac/org-type"/>
</dbReference>
<dbReference type="InterPro" id="IPR020606">
    <property type="entry name" value="Ribosomal_uS7_CS"/>
</dbReference>
<dbReference type="InterPro" id="IPR023798">
    <property type="entry name" value="Ribosomal_uS7_dom"/>
</dbReference>
<dbReference type="InterPro" id="IPR036823">
    <property type="entry name" value="Ribosomal_uS7_dom_sf"/>
</dbReference>
<dbReference type="NCBIfam" id="TIGR01029">
    <property type="entry name" value="rpsG_bact"/>
    <property type="match status" value="1"/>
</dbReference>
<dbReference type="PANTHER" id="PTHR11205">
    <property type="entry name" value="RIBOSOMAL PROTEIN S7"/>
    <property type="match status" value="1"/>
</dbReference>
<dbReference type="Pfam" id="PF00177">
    <property type="entry name" value="Ribosomal_S7"/>
    <property type="match status" value="1"/>
</dbReference>
<dbReference type="PIRSF" id="PIRSF002122">
    <property type="entry name" value="RPS7p_RPS7a_RPS5e_RPS7o"/>
    <property type="match status" value="1"/>
</dbReference>
<dbReference type="SUPFAM" id="SSF47973">
    <property type="entry name" value="Ribosomal protein S7"/>
    <property type="match status" value="1"/>
</dbReference>
<dbReference type="PROSITE" id="PS00052">
    <property type="entry name" value="RIBOSOMAL_S7"/>
    <property type="match status" value="1"/>
</dbReference>
<gene>
    <name evidence="1" type="primary">rpsG</name>
    <name type="ordered locus">spyM18_0259</name>
</gene>
<evidence type="ECO:0000255" key="1">
    <source>
        <dbReference type="HAMAP-Rule" id="MF_00480"/>
    </source>
</evidence>
<evidence type="ECO:0000305" key="2"/>
<keyword id="KW-0687">Ribonucleoprotein</keyword>
<keyword id="KW-0689">Ribosomal protein</keyword>
<keyword id="KW-0694">RNA-binding</keyword>
<keyword id="KW-0699">rRNA-binding</keyword>
<keyword id="KW-0820">tRNA-binding</keyword>
<proteinExistence type="inferred from homology"/>
<accession>P66620</accession>
<accession>Q9A1H2</accession>
<comment type="function">
    <text evidence="1">One of the primary rRNA binding proteins, it binds directly to 16S rRNA where it nucleates assembly of the head domain of the 30S subunit. Is located at the subunit interface close to the decoding center, probably blocks exit of the E-site tRNA.</text>
</comment>
<comment type="subunit">
    <text evidence="1">Part of the 30S ribosomal subunit. Contacts proteins S9 and S11.</text>
</comment>
<comment type="similarity">
    <text evidence="1">Belongs to the universal ribosomal protein uS7 family.</text>
</comment>
<reference key="1">
    <citation type="journal article" date="2002" name="Proc. Natl. Acad. Sci. U.S.A.">
        <title>Genome sequence and comparative microarray analysis of serotype M18 group A Streptococcus strains associated with acute rheumatic fever outbreaks.</title>
        <authorList>
            <person name="Smoot J.C."/>
            <person name="Barbian K.D."/>
            <person name="Van Gompel J.J."/>
            <person name="Smoot L.M."/>
            <person name="Chaussee M.S."/>
            <person name="Sylva G.L."/>
            <person name="Sturdevant D.E."/>
            <person name="Ricklefs S.M."/>
            <person name="Porcella S.F."/>
            <person name="Parkins L.D."/>
            <person name="Beres S.B."/>
            <person name="Campbell D.S."/>
            <person name="Smith T.M."/>
            <person name="Zhang Q."/>
            <person name="Kapur V."/>
            <person name="Daly J.A."/>
            <person name="Veasy L.G."/>
            <person name="Musser J.M."/>
        </authorList>
    </citation>
    <scope>NUCLEOTIDE SEQUENCE [LARGE SCALE GENOMIC DNA]</scope>
    <source>
        <strain>MGAS8232</strain>
    </source>
</reference>